<organism>
    <name type="scientific">Lycosa singoriensis</name>
    <name type="common">Wolf spider</name>
    <name type="synonym">Aranea singoriensis</name>
    <dbReference type="NCBI Taxonomy" id="434756"/>
    <lineage>
        <taxon>Eukaryota</taxon>
        <taxon>Metazoa</taxon>
        <taxon>Ecdysozoa</taxon>
        <taxon>Arthropoda</taxon>
        <taxon>Chelicerata</taxon>
        <taxon>Arachnida</taxon>
        <taxon>Araneae</taxon>
        <taxon>Araneomorphae</taxon>
        <taxon>Entelegynae</taxon>
        <taxon>Lycosoidea</taxon>
        <taxon>Lycosidae</taxon>
        <taxon>Lycosa</taxon>
    </lineage>
</organism>
<proteinExistence type="evidence at transcript level"/>
<name>TX153_LYCSI</name>
<sequence>MKFVLLFGVFLVTLFSYSSAEMLDDFDQADEDELLSLIEKEEARKDCIPKHHECTNNKHGCCRGHLFKYKCQCTTVVTQSGEETERCFCGTPPHHKAAELVVGFGKKIFG</sequence>
<keyword id="KW-1015">Disulfide bond</keyword>
<keyword id="KW-0960">Knottin</keyword>
<keyword id="KW-0964">Secreted</keyword>
<keyword id="KW-0732">Signal</keyword>
<keyword id="KW-0800">Toxin</keyword>
<dbReference type="EMBL" id="EU925976">
    <property type="protein sequence ID" value="ACI41308.1"/>
    <property type="molecule type" value="mRNA"/>
</dbReference>
<dbReference type="EMBL" id="FM863980">
    <property type="protein sequence ID" value="CAS03578.1"/>
    <property type="molecule type" value="mRNA"/>
</dbReference>
<dbReference type="SMR" id="B6DCP2"/>
<dbReference type="ArachnoServer" id="AS000925">
    <property type="toxin name" value="U1-lycotoxin-Ls1kk"/>
</dbReference>
<dbReference type="GO" id="GO:0005576">
    <property type="term" value="C:extracellular region"/>
    <property type="evidence" value="ECO:0007669"/>
    <property type="project" value="UniProtKB-SubCell"/>
</dbReference>
<dbReference type="GO" id="GO:0090729">
    <property type="term" value="F:toxin activity"/>
    <property type="evidence" value="ECO:0007669"/>
    <property type="project" value="UniProtKB-KW"/>
</dbReference>
<dbReference type="InterPro" id="IPR019553">
    <property type="entry name" value="Spider_toxin_CSTX_knottin"/>
</dbReference>
<dbReference type="InterPro" id="IPR011142">
    <property type="entry name" value="Spider_toxin_CSTX_Knottin_CS"/>
</dbReference>
<dbReference type="Pfam" id="PF10530">
    <property type="entry name" value="Toxin_35"/>
    <property type="match status" value="1"/>
</dbReference>
<dbReference type="PROSITE" id="PS60029">
    <property type="entry name" value="SPIDER_CSTX"/>
    <property type="match status" value="1"/>
</dbReference>
<comment type="subcellular location">
    <subcellularLocation>
        <location evidence="1">Secreted</location>
    </subcellularLocation>
</comment>
<comment type="tissue specificity">
    <text>Expressed by the venom gland.</text>
</comment>
<comment type="domain">
    <text evidence="1">The presence of a 'disulfide through disulfide knot' structurally defines this protein as a knottin.</text>
</comment>
<comment type="similarity">
    <text evidence="3">Belongs to the neurotoxin 19 (CSTX) family. 03 subfamily.</text>
</comment>
<feature type="signal peptide" evidence="2">
    <location>
        <begin position="1"/>
        <end position="20"/>
    </location>
</feature>
<feature type="propeptide" id="PRO_0000401601" evidence="1">
    <location>
        <begin position="21"/>
        <end position="44"/>
    </location>
</feature>
<feature type="chain" id="PRO_0000401602" description="U1-lycotoxin-Ls1kk">
    <location>
        <begin position="45"/>
        <end position="110"/>
    </location>
</feature>
<feature type="disulfide bond" evidence="1">
    <location>
        <begin position="47"/>
        <end position="62"/>
    </location>
</feature>
<feature type="disulfide bond" evidence="1">
    <location>
        <begin position="54"/>
        <end position="71"/>
    </location>
</feature>
<feature type="disulfide bond" evidence="1">
    <location>
        <begin position="61"/>
        <end position="89"/>
    </location>
</feature>
<feature type="disulfide bond" evidence="1">
    <location>
        <begin position="73"/>
        <end position="87"/>
    </location>
</feature>
<reference key="1">
    <citation type="journal article" date="2010" name="Zoology">
        <title>Transcriptome analysis of the venom glands of the Chinese wolf spider Lycosa singoriensis.</title>
        <authorList>
            <person name="Zhang Y."/>
            <person name="Chen J."/>
            <person name="Tang X."/>
            <person name="Wang F."/>
            <person name="Jiang L."/>
            <person name="Xiong X."/>
            <person name="Wang M."/>
            <person name="Rong M."/>
            <person name="Liu Z."/>
            <person name="Liang S."/>
        </authorList>
    </citation>
    <scope>NUCLEOTIDE SEQUENCE [LARGE SCALE MRNA]</scope>
    <source>
        <tissue>Venom gland</tissue>
    </source>
</reference>
<evidence type="ECO:0000250" key="1"/>
<evidence type="ECO:0000255" key="2"/>
<evidence type="ECO:0000305" key="3"/>
<accession>B6DCP2</accession>
<protein>
    <recommendedName>
        <fullName>U1-lycotoxin-Ls1kk</fullName>
    </recommendedName>
    <alternativeName>
        <fullName>Toxin-like structure LSTX-A53</fullName>
    </alternativeName>
</protein>